<organism>
    <name type="scientific">Pyricularia oryzae (strain 70-15 / ATCC MYA-4617 / FGSC 8958)</name>
    <name type="common">Rice blast fungus</name>
    <name type="synonym">Magnaporthe oryzae</name>
    <dbReference type="NCBI Taxonomy" id="242507"/>
    <lineage>
        <taxon>Eukaryota</taxon>
        <taxon>Fungi</taxon>
        <taxon>Dikarya</taxon>
        <taxon>Ascomycota</taxon>
        <taxon>Pezizomycotina</taxon>
        <taxon>Sordariomycetes</taxon>
        <taxon>Sordariomycetidae</taxon>
        <taxon>Magnaporthales</taxon>
        <taxon>Pyriculariaceae</taxon>
        <taxon>Pyricularia</taxon>
    </lineage>
</organism>
<reference key="1">
    <citation type="journal article" date="2005" name="Nature">
        <title>The genome sequence of the rice blast fungus Magnaporthe grisea.</title>
        <authorList>
            <person name="Dean R.A."/>
            <person name="Talbot N.J."/>
            <person name="Ebbole D.J."/>
            <person name="Farman M.L."/>
            <person name="Mitchell T.K."/>
            <person name="Orbach M.J."/>
            <person name="Thon M.R."/>
            <person name="Kulkarni R."/>
            <person name="Xu J.-R."/>
            <person name="Pan H."/>
            <person name="Read N.D."/>
            <person name="Lee Y.-H."/>
            <person name="Carbone I."/>
            <person name="Brown D."/>
            <person name="Oh Y.Y."/>
            <person name="Donofrio N."/>
            <person name="Jeong J.S."/>
            <person name="Soanes D.M."/>
            <person name="Djonovic S."/>
            <person name="Kolomiets E."/>
            <person name="Rehmeyer C."/>
            <person name="Li W."/>
            <person name="Harding M."/>
            <person name="Kim S."/>
            <person name="Lebrun M.-H."/>
            <person name="Bohnert H."/>
            <person name="Coughlan S."/>
            <person name="Butler J."/>
            <person name="Calvo S.E."/>
            <person name="Ma L.-J."/>
            <person name="Nicol R."/>
            <person name="Purcell S."/>
            <person name="Nusbaum C."/>
            <person name="Galagan J.E."/>
            <person name="Birren B.W."/>
        </authorList>
    </citation>
    <scope>NUCLEOTIDE SEQUENCE [LARGE SCALE GENOMIC DNA]</scope>
    <source>
        <strain>70-15 / ATCC MYA-4617 / FGSC 8958</strain>
    </source>
</reference>
<reference key="2">
    <citation type="journal article" date="2006" name="Plant Cell">
        <title>Multiple upstream signals converge on the adaptor protein Mst50 in Magnaporthe grisea.</title>
        <authorList>
            <person name="Park G."/>
            <person name="Xue C."/>
            <person name="Zhao X."/>
            <person name="Kim Y."/>
            <person name="Orbach M."/>
            <person name="Xu J.R."/>
        </authorList>
    </citation>
    <scope>INTERACTION WITH MST50</scope>
</reference>
<reference key="3">
    <citation type="journal article" date="2014" name="Mol. Plant Microbe Interact.">
        <title>Bypassing both surface attachment and surface recognition requirements for appressorium formation by overactive ras signaling in Magnaporthe oryzae.</title>
        <authorList>
            <person name="Zhou X."/>
            <person name="Zhao X."/>
            <person name="Xue C."/>
            <person name="Dai Y."/>
            <person name="Xu J.R."/>
        </authorList>
    </citation>
    <scope>DISRUPTION PHENOTYPE</scope>
</reference>
<reference key="4">
    <citation type="journal article" date="2019" name="Mol. Plant Pathol.">
        <title>The farnesyltransferase beta-subunit RAM1 regulates localization of RAS proteins and appressorium-mediated infection in Magnaporthe oryzae.</title>
        <authorList>
            <person name="Aboelfotoh Hendy A."/>
            <person name="Xing J."/>
            <person name="Chen X."/>
            <person name="Chen X.L."/>
        </authorList>
    </citation>
    <scope>SUBCELLULAR LOCATION</scope>
    <scope>INTERACTION WITH RAM1</scope>
    <scope>MUTAGENESIS OF CYS-238</scope>
    <scope>ISOPRENYLATION AT CYS-238</scope>
</reference>
<dbReference type="EMBL" id="CM001233">
    <property type="protein sequence ID" value="EHA52438.1"/>
    <property type="molecule type" value="Genomic_DNA"/>
</dbReference>
<dbReference type="RefSeq" id="XP_003712245.1">
    <property type="nucleotide sequence ID" value="XM_003712197.1"/>
</dbReference>
<dbReference type="SMR" id="G4N1S3"/>
<dbReference type="STRING" id="242507.G4N1S3"/>
<dbReference type="EnsemblFungi" id="MGG_09499T0">
    <property type="protein sequence ID" value="MGG_09499T0"/>
    <property type="gene ID" value="MGG_09499"/>
</dbReference>
<dbReference type="GeneID" id="2680536"/>
<dbReference type="KEGG" id="mgr:MGG_09499"/>
<dbReference type="VEuPathDB" id="FungiDB:MGG_09499"/>
<dbReference type="eggNOG" id="KOG0395">
    <property type="taxonomic scope" value="Eukaryota"/>
</dbReference>
<dbReference type="HOGENOM" id="CLU_041217_9_8_1"/>
<dbReference type="InParanoid" id="G4N1S3"/>
<dbReference type="OMA" id="MWGCPFV"/>
<dbReference type="OrthoDB" id="5976022at2759"/>
<dbReference type="Proteomes" id="UP000009058">
    <property type="component" value="Chromosome 3"/>
</dbReference>
<dbReference type="GO" id="GO:0005886">
    <property type="term" value="C:plasma membrane"/>
    <property type="evidence" value="ECO:0007669"/>
    <property type="project" value="UniProtKB-SubCell"/>
</dbReference>
<dbReference type="GO" id="GO:0005525">
    <property type="term" value="F:GTP binding"/>
    <property type="evidence" value="ECO:0007669"/>
    <property type="project" value="UniProtKB-KW"/>
</dbReference>
<dbReference type="GO" id="GO:0003924">
    <property type="term" value="F:GTPase activity"/>
    <property type="evidence" value="ECO:0007669"/>
    <property type="project" value="InterPro"/>
</dbReference>
<dbReference type="GO" id="GO:0007165">
    <property type="term" value="P:signal transduction"/>
    <property type="evidence" value="ECO:0007669"/>
    <property type="project" value="InterPro"/>
</dbReference>
<dbReference type="FunFam" id="3.40.50.300:FF:000654">
    <property type="entry name" value="Small g-protein ras2"/>
    <property type="match status" value="1"/>
</dbReference>
<dbReference type="Gene3D" id="3.40.50.300">
    <property type="entry name" value="P-loop containing nucleotide triphosphate hydrolases"/>
    <property type="match status" value="1"/>
</dbReference>
<dbReference type="InterPro" id="IPR027417">
    <property type="entry name" value="P-loop_NTPase"/>
</dbReference>
<dbReference type="InterPro" id="IPR005225">
    <property type="entry name" value="Small_GTP-bd"/>
</dbReference>
<dbReference type="InterPro" id="IPR001806">
    <property type="entry name" value="Small_GTPase"/>
</dbReference>
<dbReference type="InterPro" id="IPR020849">
    <property type="entry name" value="Small_GTPase_Ras-type"/>
</dbReference>
<dbReference type="NCBIfam" id="TIGR00231">
    <property type="entry name" value="small_GTP"/>
    <property type="match status" value="1"/>
</dbReference>
<dbReference type="PANTHER" id="PTHR24070">
    <property type="entry name" value="RAS, DI-RAS, AND RHEB FAMILY MEMBERS OF SMALL GTPASE SUPERFAMILY"/>
    <property type="match status" value="1"/>
</dbReference>
<dbReference type="Pfam" id="PF00071">
    <property type="entry name" value="Ras"/>
    <property type="match status" value="1"/>
</dbReference>
<dbReference type="PRINTS" id="PR00449">
    <property type="entry name" value="RASTRNSFRMNG"/>
</dbReference>
<dbReference type="SMART" id="SM00175">
    <property type="entry name" value="RAB"/>
    <property type="match status" value="1"/>
</dbReference>
<dbReference type="SMART" id="SM00176">
    <property type="entry name" value="RAN"/>
    <property type="match status" value="1"/>
</dbReference>
<dbReference type="SMART" id="SM00173">
    <property type="entry name" value="RAS"/>
    <property type="match status" value="1"/>
</dbReference>
<dbReference type="SMART" id="SM00174">
    <property type="entry name" value="RHO"/>
    <property type="match status" value="1"/>
</dbReference>
<dbReference type="SUPFAM" id="SSF52540">
    <property type="entry name" value="P-loop containing nucleoside triphosphate hydrolases"/>
    <property type="match status" value="1"/>
</dbReference>
<dbReference type="PROSITE" id="PS51421">
    <property type="entry name" value="RAS"/>
    <property type="match status" value="1"/>
</dbReference>
<accession>G4N1S3</accession>
<protein>
    <recommendedName>
        <fullName>Ras-like protein 1</fullName>
    </recommendedName>
</protein>
<comment type="function">
    <text evidence="1 3">Modulates the activity of the adenylate cyclase catalytic subunit and therefore affects the biosynthesis of cyclic-AMP (By similarity). Plays a role in both surface attachment and surface recognition of appressoria, a highly specialized infection structure for plant penetration. Regulates appressorium formation by coordinated regulation of cAMP signaling and Pmk1 MAPK pathways (By similarity).</text>
</comment>
<comment type="activity regulation">
    <text evidence="3">Alternates between an inactive form bound to GDP and an active form bound to GTP. Activated by a guanine nucleotide-exchange factor (GEF) and inactivated by a GTPase-activating protein (GAP).</text>
</comment>
<comment type="subunit">
    <text evidence="7">Interacts with farnesyltransferase beta subunit RAM1.</text>
</comment>
<comment type="subcellular location">
    <subcellularLocation>
        <location evidence="5">Cell membrane</location>
        <topology evidence="5">Lipid-anchor</topology>
        <orientation evidence="5">Cytoplasmic side</orientation>
    </subcellularLocation>
</comment>
<comment type="disruption phenotype">
    <text evidence="6">Displays slight reduction in conidiation, but normal growth, appressorium formation, and plant infection.</text>
</comment>
<comment type="similarity">
    <text evidence="10">Belongs to the small GTPase superfamily. Ras family.</text>
</comment>
<keyword id="KW-1003">Cell membrane</keyword>
<keyword id="KW-0342">GTP-binding</keyword>
<keyword id="KW-0449">Lipoprotein</keyword>
<keyword id="KW-0472">Membrane</keyword>
<keyword id="KW-0488">Methylation</keyword>
<keyword id="KW-0547">Nucleotide-binding</keyword>
<keyword id="KW-0636">Prenylation</keyword>
<keyword id="KW-1185">Reference proteome</keyword>
<name>RAS1_PYRO7</name>
<feature type="chain" id="PRO_0000449939" description="Ras-like protein 1">
    <location>
        <begin position="1"/>
        <end position="241"/>
    </location>
</feature>
<feature type="propeptide" id="PRO_0000449940" description="Removed in mature form" evidence="3">
    <location>
        <begin position="239"/>
        <end position="241"/>
    </location>
</feature>
<feature type="region of interest" description="Disordered" evidence="4">
    <location>
        <begin position="190"/>
        <end position="241"/>
    </location>
</feature>
<feature type="short sequence motif" description="Effector region" evidence="3">
    <location>
        <begin position="36"/>
        <end position="44"/>
    </location>
</feature>
<feature type="compositionally biased region" description="Polar residues" evidence="4">
    <location>
        <begin position="191"/>
        <end position="205"/>
    </location>
</feature>
<feature type="compositionally biased region" description="Basic and acidic residues" evidence="4">
    <location>
        <begin position="219"/>
        <end position="230"/>
    </location>
</feature>
<feature type="binding site" evidence="2">
    <location>
        <begin position="17"/>
        <end position="22"/>
    </location>
    <ligand>
        <name>GTP</name>
        <dbReference type="ChEBI" id="CHEBI:37565"/>
    </ligand>
</feature>
<feature type="binding site" evidence="2">
    <location>
        <begin position="33"/>
        <end position="39"/>
    </location>
    <ligand>
        <name>GTP</name>
        <dbReference type="ChEBI" id="CHEBI:37565"/>
    </ligand>
</feature>
<feature type="binding site" evidence="2">
    <location>
        <begin position="63"/>
        <end position="64"/>
    </location>
    <ligand>
        <name>GTP</name>
        <dbReference type="ChEBI" id="CHEBI:37565"/>
    </ligand>
</feature>
<feature type="binding site" evidence="2">
    <location>
        <begin position="138"/>
        <end position="141"/>
    </location>
    <ligand>
        <name>GTP</name>
        <dbReference type="ChEBI" id="CHEBI:37565"/>
    </ligand>
</feature>
<feature type="binding site" evidence="2">
    <location>
        <begin position="168"/>
        <end position="170"/>
    </location>
    <ligand>
        <name>GTP</name>
        <dbReference type="ChEBI" id="CHEBI:37565"/>
    </ligand>
</feature>
<feature type="modified residue" description="Cysteine methyl ester" evidence="3">
    <location>
        <position position="238"/>
    </location>
</feature>
<feature type="lipid moiety-binding region" description="S-farnesyl cysteine" evidence="11">
    <location>
        <position position="238"/>
    </location>
</feature>
<feature type="mutagenesis site" description="Prevents farnesylation and restricts subcellular location to the cytoplasm in appressorium, mycelium, conidium and infection hyphae." evidence="7">
    <original>C</original>
    <variation>S</variation>
    <location>
        <position position="238"/>
    </location>
</feature>
<proteinExistence type="evidence at protein level"/>
<sequence>MTGRLQLHKLVVLGDGGVGKTALTIQLCLQHFVETYDPTIEDSYRKQVVIDNQACMLEVLDTAGQEEYTALRDQWIRDGEGFVLVYSISSRSSFSRIKRFHHQIQRVKESCASSPSYPGSPIATVTTQAPVPIMLVGNKSDRVTEREVSTQEGHALARELGCEFVEASAKNCINVEKAFYDVVRILRRQRQQASRPSLPGNSRTKTGGMGKSESFYQSDGKRGSRKDGEKHRSKPIKCVIL</sequence>
<evidence type="ECO:0000250" key="1">
    <source>
        <dbReference type="UniProtKB" id="G4MZY8"/>
    </source>
</evidence>
<evidence type="ECO:0000250" key="2">
    <source>
        <dbReference type="UniProtKB" id="P01112"/>
    </source>
</evidence>
<evidence type="ECO:0000250" key="3">
    <source>
        <dbReference type="UniProtKB" id="P01119"/>
    </source>
</evidence>
<evidence type="ECO:0000256" key="4">
    <source>
        <dbReference type="SAM" id="MobiDB-lite"/>
    </source>
</evidence>
<evidence type="ECO:0000269" key="5">
    <source>
    </source>
</evidence>
<evidence type="ECO:0000269" key="6">
    <source>
    </source>
</evidence>
<evidence type="ECO:0000269" key="7">
    <source>
    </source>
</evidence>
<evidence type="ECO:0000303" key="8">
    <source>
    </source>
</evidence>
<evidence type="ECO:0000303" key="9">
    <source>
    </source>
</evidence>
<evidence type="ECO:0000305" key="10"/>
<evidence type="ECO:0000305" key="11">
    <source>
    </source>
</evidence>
<gene>
    <name evidence="8 9" type="primary">RAS1</name>
    <name type="ORF">MGG_09499</name>
</gene>